<keyword id="KW-0256">Endoplasmic reticulum</keyword>
<keyword id="KW-0472">Membrane</keyword>
<keyword id="KW-1185">Reference proteome</keyword>
<keyword id="KW-0812">Transmembrane</keyword>
<keyword id="KW-1133">Transmembrane helix</keyword>
<comment type="function">
    <text evidence="1">May play a role in cell growth and maintenance of cell morphology.</text>
</comment>
<comment type="subcellular location">
    <subcellularLocation>
        <location evidence="1">Endoplasmic reticulum membrane</location>
        <topology evidence="1">Single-pass membrane protein</topology>
    </subcellularLocation>
</comment>
<comment type="tissue specificity">
    <text evidence="3">Expressed in heart, brain, spleen, lung, liver, skeletal muscle, kidney and testis.</text>
</comment>
<comment type="developmental stage">
    <text evidence="3">Expressed in embryo from 7 to 17 dpc.</text>
</comment>
<comment type="similarity">
    <text evidence="4">Belongs to the TRIQK family.</text>
</comment>
<evidence type="ECO:0000250" key="1"/>
<evidence type="ECO:0000255" key="2"/>
<evidence type="ECO:0000269" key="3">
    <source>
    </source>
</evidence>
<evidence type="ECO:0000305" key="4"/>
<gene>
    <name type="primary">Triqk</name>
    <name type="synonym">Gm11818</name>
</gene>
<feature type="chain" id="PRO_0000398147" description="Triple QxxK/R motif-containing protein">
    <location>
        <begin position="1"/>
        <end position="86"/>
    </location>
</feature>
<feature type="transmembrane region" description="Helical" evidence="2">
    <location>
        <begin position="51"/>
        <end position="71"/>
    </location>
</feature>
<accession>B2B9E1</accession>
<protein>
    <recommendedName>
        <fullName>Triple QxxK/R motif-containing protein</fullName>
    </recommendedName>
    <alternativeName>
        <fullName>Triple repetitive-sequence of QXXK/R protein homolog</fullName>
    </alternativeName>
</protein>
<reference key="1">
    <citation type="journal article" date="2008" name="Zool. Sci.">
        <title>TRIQK, a novel family of small proteins localized to the endoplasmic reticulum membrane, is conserved across vertebrates.</title>
        <authorList>
            <person name="Onuma Y."/>
            <person name="Watanabe A."/>
            <person name="Aburatani H."/>
            <person name="Asashima M."/>
            <person name="Whitman M."/>
        </authorList>
    </citation>
    <scope>NUCLEOTIDE SEQUENCE [MRNA]</scope>
    <scope>DEVELOPMENTAL STAGE</scope>
    <scope>TISSUE SPECIFICITY</scope>
</reference>
<name>TRIQK_MOUSE</name>
<proteinExistence type="evidence at transcript level"/>
<sequence length="86" mass="9722">MGRKDSSNTKLPVDQYRKQIGKQDYKKTKPILRATKLKAEAKKTAIGIKEVGLMLAAILALLLAFYAFFYLRLSTNIDSDLDLDED</sequence>
<organism>
    <name type="scientific">Mus musculus</name>
    <name type="common">Mouse</name>
    <dbReference type="NCBI Taxonomy" id="10090"/>
    <lineage>
        <taxon>Eukaryota</taxon>
        <taxon>Metazoa</taxon>
        <taxon>Chordata</taxon>
        <taxon>Craniata</taxon>
        <taxon>Vertebrata</taxon>
        <taxon>Euteleostomi</taxon>
        <taxon>Mammalia</taxon>
        <taxon>Eutheria</taxon>
        <taxon>Euarchontoglires</taxon>
        <taxon>Glires</taxon>
        <taxon>Rodentia</taxon>
        <taxon>Myomorpha</taxon>
        <taxon>Muroidea</taxon>
        <taxon>Muridae</taxon>
        <taxon>Murinae</taxon>
        <taxon>Mus</taxon>
        <taxon>Mus</taxon>
    </lineage>
</organism>
<dbReference type="EMBL" id="DQ351292">
    <property type="protein sequence ID" value="ABC84191.1"/>
    <property type="molecule type" value="mRNA"/>
</dbReference>
<dbReference type="CCDS" id="CCDS71348.1"/>
<dbReference type="RefSeq" id="NP_001165272.1">
    <property type="nucleotide sequence ID" value="NM_001171801.1"/>
</dbReference>
<dbReference type="RefSeq" id="NP_776107.2">
    <property type="nucleotide sequence ID" value="NM_173746.3"/>
</dbReference>
<dbReference type="SMR" id="B2B9E1"/>
<dbReference type="FunCoup" id="B2B9E1">
    <property type="interactions" value="79"/>
</dbReference>
<dbReference type="STRING" id="10090.ENSMUSP00000138966"/>
<dbReference type="PhosphoSitePlus" id="B2B9E1"/>
<dbReference type="PaxDb" id="10090-ENSMUSP00000139205"/>
<dbReference type="ProteomicsDB" id="259184"/>
<dbReference type="Pumba" id="B2B9E1"/>
<dbReference type="Antibodypedia" id="77803">
    <property type="antibodies" value="2 antibodies from 2 providers"/>
</dbReference>
<dbReference type="DNASU" id="208820"/>
<dbReference type="Ensembl" id="ENSMUST00000143186.8">
    <property type="protein sequence ID" value="ENSMUSP00000139205.2"/>
    <property type="gene ID" value="ENSMUSG00000055963.13"/>
</dbReference>
<dbReference type="Ensembl" id="ENSMUST00000183345.2">
    <property type="protein sequence ID" value="ENSMUSP00000138966.2"/>
    <property type="gene ID" value="ENSMUSG00000055963.13"/>
</dbReference>
<dbReference type="GeneID" id="208820"/>
<dbReference type="KEGG" id="mmu:208820"/>
<dbReference type="UCSC" id="uc008sas.2">
    <property type="organism name" value="mouse"/>
</dbReference>
<dbReference type="AGR" id="MGI:3650048"/>
<dbReference type="CTD" id="286144"/>
<dbReference type="MGI" id="MGI:3650048">
    <property type="gene designation" value="Triqk"/>
</dbReference>
<dbReference type="VEuPathDB" id="HostDB:ENSMUSG00000055963"/>
<dbReference type="eggNOG" id="ENOG502S3QR">
    <property type="taxonomic scope" value="Eukaryota"/>
</dbReference>
<dbReference type="GeneTree" id="ENSGT00390000017350"/>
<dbReference type="HOGENOM" id="CLU_191636_0_0_1"/>
<dbReference type="InParanoid" id="B2B9E1"/>
<dbReference type="OMA" id="NIGKQDY"/>
<dbReference type="OrthoDB" id="10049402at2759"/>
<dbReference type="PhylomeDB" id="B2B9E1"/>
<dbReference type="BioGRID-ORCS" id="208820">
    <property type="hits" value="4 hits in 73 CRISPR screens"/>
</dbReference>
<dbReference type="ChiTaRS" id="Triqk">
    <property type="organism name" value="mouse"/>
</dbReference>
<dbReference type="PRO" id="PR:B2B9E1"/>
<dbReference type="Proteomes" id="UP000000589">
    <property type="component" value="Chromosome 4"/>
</dbReference>
<dbReference type="RNAct" id="B2B9E1">
    <property type="molecule type" value="protein"/>
</dbReference>
<dbReference type="Bgee" id="ENSMUSG00000055963">
    <property type="expression patterns" value="Expressed in otolith organ and 200 other cell types or tissues"/>
</dbReference>
<dbReference type="GO" id="GO:0005789">
    <property type="term" value="C:endoplasmic reticulum membrane"/>
    <property type="evidence" value="ECO:0007669"/>
    <property type="project" value="UniProtKB-SubCell"/>
</dbReference>
<dbReference type="InterPro" id="IPR024842">
    <property type="entry name" value="TRIQK"/>
</dbReference>
<dbReference type="PANTHER" id="PTHR20583">
    <property type="entry name" value="TRIPLE QXXK/R MOTIF-CONTAINING PROTEIN"/>
    <property type="match status" value="1"/>
</dbReference>
<dbReference type="PANTHER" id="PTHR20583:SF1">
    <property type="entry name" value="TRIPLE QXXK_R MOTIF-CONTAINING PROTEIN"/>
    <property type="match status" value="1"/>
</dbReference>
<dbReference type="Pfam" id="PF15168">
    <property type="entry name" value="TRIQK"/>
    <property type="match status" value="1"/>
</dbReference>